<proteinExistence type="inferred from homology"/>
<evidence type="ECO:0000255" key="1">
    <source>
        <dbReference type="HAMAP-Rule" id="MF_01039"/>
    </source>
</evidence>
<dbReference type="EC" id="5.4.2.11" evidence="1"/>
<dbReference type="EMBL" id="CP000494">
    <property type="protein sequence ID" value="ABQ32495.1"/>
    <property type="molecule type" value="Genomic_DNA"/>
</dbReference>
<dbReference type="RefSeq" id="WP_012040553.1">
    <property type="nucleotide sequence ID" value="NC_009485.1"/>
</dbReference>
<dbReference type="SMR" id="A5E8K1"/>
<dbReference type="STRING" id="288000.BBta_0198"/>
<dbReference type="KEGG" id="bbt:BBta_0198"/>
<dbReference type="eggNOG" id="COG0588">
    <property type="taxonomic scope" value="Bacteria"/>
</dbReference>
<dbReference type="HOGENOM" id="CLU_033323_1_4_5"/>
<dbReference type="OrthoDB" id="9781415at2"/>
<dbReference type="UniPathway" id="UPA00109">
    <property type="reaction ID" value="UER00186"/>
</dbReference>
<dbReference type="Proteomes" id="UP000000246">
    <property type="component" value="Chromosome"/>
</dbReference>
<dbReference type="GO" id="GO:0004619">
    <property type="term" value="F:phosphoglycerate mutase activity"/>
    <property type="evidence" value="ECO:0007669"/>
    <property type="project" value="UniProtKB-EC"/>
</dbReference>
<dbReference type="GO" id="GO:0006094">
    <property type="term" value="P:gluconeogenesis"/>
    <property type="evidence" value="ECO:0007669"/>
    <property type="project" value="UniProtKB-UniRule"/>
</dbReference>
<dbReference type="GO" id="GO:0006096">
    <property type="term" value="P:glycolytic process"/>
    <property type="evidence" value="ECO:0007669"/>
    <property type="project" value="UniProtKB-UniRule"/>
</dbReference>
<dbReference type="CDD" id="cd07067">
    <property type="entry name" value="HP_PGM_like"/>
    <property type="match status" value="1"/>
</dbReference>
<dbReference type="Gene3D" id="3.40.50.1240">
    <property type="entry name" value="Phosphoglycerate mutase-like"/>
    <property type="match status" value="1"/>
</dbReference>
<dbReference type="HAMAP" id="MF_01039">
    <property type="entry name" value="PGAM_GpmA"/>
    <property type="match status" value="1"/>
</dbReference>
<dbReference type="InterPro" id="IPR013078">
    <property type="entry name" value="His_Pase_superF_clade-1"/>
</dbReference>
<dbReference type="InterPro" id="IPR029033">
    <property type="entry name" value="His_PPase_superfam"/>
</dbReference>
<dbReference type="InterPro" id="IPR001345">
    <property type="entry name" value="PG/BPGM_mutase_AS"/>
</dbReference>
<dbReference type="InterPro" id="IPR005952">
    <property type="entry name" value="Phosphogly_mut1"/>
</dbReference>
<dbReference type="NCBIfam" id="TIGR01258">
    <property type="entry name" value="pgm_1"/>
    <property type="match status" value="1"/>
</dbReference>
<dbReference type="NCBIfam" id="NF002339">
    <property type="entry name" value="PRK01295.1"/>
    <property type="match status" value="1"/>
</dbReference>
<dbReference type="PANTHER" id="PTHR11931">
    <property type="entry name" value="PHOSPHOGLYCERATE MUTASE"/>
    <property type="match status" value="1"/>
</dbReference>
<dbReference type="Pfam" id="PF00300">
    <property type="entry name" value="His_Phos_1"/>
    <property type="match status" value="1"/>
</dbReference>
<dbReference type="SMART" id="SM00855">
    <property type="entry name" value="PGAM"/>
    <property type="match status" value="1"/>
</dbReference>
<dbReference type="SUPFAM" id="SSF53254">
    <property type="entry name" value="Phosphoglycerate mutase-like"/>
    <property type="match status" value="1"/>
</dbReference>
<dbReference type="PROSITE" id="PS00175">
    <property type="entry name" value="PG_MUTASE"/>
    <property type="match status" value="1"/>
</dbReference>
<name>GPMA_BRASB</name>
<organism>
    <name type="scientific">Bradyrhizobium sp. (strain BTAi1 / ATCC BAA-1182)</name>
    <dbReference type="NCBI Taxonomy" id="288000"/>
    <lineage>
        <taxon>Bacteria</taxon>
        <taxon>Pseudomonadati</taxon>
        <taxon>Pseudomonadota</taxon>
        <taxon>Alphaproteobacteria</taxon>
        <taxon>Hyphomicrobiales</taxon>
        <taxon>Nitrobacteraceae</taxon>
        <taxon>Bradyrhizobium</taxon>
    </lineage>
</organism>
<reference key="1">
    <citation type="journal article" date="2007" name="Science">
        <title>Legumes symbioses: absence of nod genes in photosynthetic bradyrhizobia.</title>
        <authorList>
            <person name="Giraud E."/>
            <person name="Moulin L."/>
            <person name="Vallenet D."/>
            <person name="Barbe V."/>
            <person name="Cytryn E."/>
            <person name="Avarre J.-C."/>
            <person name="Jaubert M."/>
            <person name="Simon D."/>
            <person name="Cartieaux F."/>
            <person name="Prin Y."/>
            <person name="Bena G."/>
            <person name="Hannibal L."/>
            <person name="Fardoux J."/>
            <person name="Kojadinovic M."/>
            <person name="Vuillet L."/>
            <person name="Lajus A."/>
            <person name="Cruveiller S."/>
            <person name="Rouy Z."/>
            <person name="Mangenot S."/>
            <person name="Segurens B."/>
            <person name="Dossat C."/>
            <person name="Franck W.L."/>
            <person name="Chang W.-S."/>
            <person name="Saunders E."/>
            <person name="Bruce D."/>
            <person name="Richardson P."/>
            <person name="Normand P."/>
            <person name="Dreyfus B."/>
            <person name="Pignol D."/>
            <person name="Stacey G."/>
            <person name="Emerich D."/>
            <person name="Vermeglio A."/>
            <person name="Medigue C."/>
            <person name="Sadowsky M."/>
        </authorList>
    </citation>
    <scope>NUCLEOTIDE SEQUENCE [LARGE SCALE GENOMIC DNA]</scope>
    <source>
        <strain>BTAi1 / ATCC BAA-1182</strain>
    </source>
</reference>
<sequence>MSERLLVLVRHGQSEWNLKNLFTGWKDPDLTEQGVSEAKEAGRKLKAHGLTFDVAFTSELTRAQHTLKLILDELGQPGLPTSRNLALNERDYGDLSGLNKDDARAKWGEEQVHVWRRSYDVPPPGGESLKDTLARALPYYVQEILPGVLRGQRTLVAAHGNSLRALIMVLEKLTPEGILKRELATGVPIIYRLKADSTVESKLDLAG</sequence>
<accession>A5E8K1</accession>
<gene>
    <name evidence="1" type="primary">gpmA</name>
    <name type="ordered locus">BBta_0198</name>
</gene>
<feature type="chain" id="PRO_1000064034" description="2,3-bisphosphoglycerate-dependent phosphoglycerate mutase">
    <location>
        <begin position="1"/>
        <end position="207"/>
    </location>
</feature>
<feature type="active site" description="Tele-phosphohistidine intermediate" evidence="1">
    <location>
        <position position="11"/>
    </location>
</feature>
<feature type="active site" description="Proton donor/acceptor" evidence="1">
    <location>
        <position position="89"/>
    </location>
</feature>
<feature type="binding site" evidence="1">
    <location>
        <begin position="10"/>
        <end position="17"/>
    </location>
    <ligand>
        <name>substrate</name>
    </ligand>
</feature>
<feature type="binding site" evidence="1">
    <location>
        <begin position="23"/>
        <end position="24"/>
    </location>
    <ligand>
        <name>substrate</name>
    </ligand>
</feature>
<feature type="binding site" evidence="1">
    <location>
        <position position="62"/>
    </location>
    <ligand>
        <name>substrate</name>
    </ligand>
</feature>
<feature type="binding site" evidence="1">
    <location>
        <begin position="89"/>
        <end position="92"/>
    </location>
    <ligand>
        <name>substrate</name>
    </ligand>
</feature>
<feature type="binding site" evidence="1">
    <location>
        <position position="100"/>
    </location>
    <ligand>
        <name>substrate</name>
    </ligand>
</feature>
<feature type="binding site" evidence="1">
    <location>
        <begin position="116"/>
        <end position="117"/>
    </location>
    <ligand>
        <name>substrate</name>
    </ligand>
</feature>
<feature type="binding site" evidence="1">
    <location>
        <begin position="160"/>
        <end position="161"/>
    </location>
    <ligand>
        <name>substrate</name>
    </ligand>
</feature>
<feature type="site" description="Transition state stabilizer" evidence="1">
    <location>
        <position position="159"/>
    </location>
</feature>
<keyword id="KW-0312">Gluconeogenesis</keyword>
<keyword id="KW-0324">Glycolysis</keyword>
<keyword id="KW-0413">Isomerase</keyword>
<keyword id="KW-1185">Reference proteome</keyword>
<comment type="function">
    <text evidence="1">Catalyzes the interconversion of 2-phosphoglycerate and 3-phosphoglycerate.</text>
</comment>
<comment type="catalytic activity">
    <reaction evidence="1">
        <text>(2R)-2-phosphoglycerate = (2R)-3-phosphoglycerate</text>
        <dbReference type="Rhea" id="RHEA:15901"/>
        <dbReference type="ChEBI" id="CHEBI:58272"/>
        <dbReference type="ChEBI" id="CHEBI:58289"/>
        <dbReference type="EC" id="5.4.2.11"/>
    </reaction>
</comment>
<comment type="pathway">
    <text evidence="1">Carbohydrate degradation; glycolysis; pyruvate from D-glyceraldehyde 3-phosphate: step 3/5.</text>
</comment>
<comment type="subunit">
    <text evidence="1">Homodimer.</text>
</comment>
<comment type="similarity">
    <text evidence="1">Belongs to the phosphoglycerate mutase family. BPG-dependent PGAM subfamily.</text>
</comment>
<protein>
    <recommendedName>
        <fullName evidence="1">2,3-bisphosphoglycerate-dependent phosphoglycerate mutase</fullName>
        <shortName evidence="1">BPG-dependent PGAM</shortName>
        <shortName evidence="1">PGAM</shortName>
        <shortName evidence="1">Phosphoglyceromutase</shortName>
        <shortName evidence="1">dPGM</shortName>
        <ecNumber evidence="1">5.4.2.11</ecNumber>
    </recommendedName>
</protein>